<comment type="function">
    <text evidence="3 4">Mediates the nuclear localization of RNR2 and RNR4, 2 subunits of the ribonucleotide reductase.</text>
</comment>
<comment type="subunit">
    <text evidence="4">Interacts with RNR2 and RNR4.</text>
</comment>
<comment type="subcellular location">
    <subcellularLocation>
        <location evidence="3">Cytoplasm</location>
    </subcellularLocation>
    <subcellularLocation>
        <location evidence="3">Nucleus</location>
    </subcellularLocation>
</comment>
<comment type="induction">
    <text evidence="2">During S phase of cell cycle.</text>
</comment>
<comment type="PTM">
    <text evidence="3 4">Phosphorylated by DUN1 in response to DNA damage which leads to its degradation.</text>
</comment>
<comment type="similarity">
    <text evidence="5">Belongs to the DIF1/spd1 family.</text>
</comment>
<organism>
    <name type="scientific">Saccharomyces cerevisiae (strain ATCC 204508 / S288c)</name>
    <name type="common">Baker's yeast</name>
    <dbReference type="NCBI Taxonomy" id="559292"/>
    <lineage>
        <taxon>Eukaryota</taxon>
        <taxon>Fungi</taxon>
        <taxon>Dikarya</taxon>
        <taxon>Ascomycota</taxon>
        <taxon>Saccharomycotina</taxon>
        <taxon>Saccharomycetes</taxon>
        <taxon>Saccharomycetales</taxon>
        <taxon>Saccharomycetaceae</taxon>
        <taxon>Saccharomyces</taxon>
    </lineage>
</organism>
<feature type="chain" id="PRO_0000247354" description="Damage-regulated import facilitator 1">
    <location>
        <begin position="1"/>
        <end position="133"/>
    </location>
</feature>
<feature type="region of interest" description="Disordered" evidence="1">
    <location>
        <begin position="1"/>
        <end position="40"/>
    </location>
</feature>
<feature type="region of interest" description="Disordered" evidence="1">
    <location>
        <begin position="109"/>
        <end position="133"/>
    </location>
</feature>
<feature type="compositionally biased region" description="Low complexity" evidence="1">
    <location>
        <begin position="16"/>
        <end position="32"/>
    </location>
</feature>
<feature type="compositionally biased region" description="Basic and acidic residues" evidence="1">
    <location>
        <begin position="109"/>
        <end position="124"/>
    </location>
</feature>
<dbReference type="EMBL" id="U21094">
    <property type="protein sequence ID" value="AAB67525.1"/>
    <property type="molecule type" value="Genomic_DNA"/>
</dbReference>
<dbReference type="EMBL" id="BK006945">
    <property type="protein sequence ID" value="DAA09737.1"/>
    <property type="molecule type" value="Genomic_DNA"/>
</dbReference>
<dbReference type="PIR" id="S69322">
    <property type="entry name" value="S69322"/>
</dbReference>
<dbReference type="RefSeq" id="NP_013541.3">
    <property type="nucleotide sequence ID" value="NM_001182325.3"/>
</dbReference>
<dbReference type="SMR" id="O13577"/>
<dbReference type="BioGRID" id="31695">
    <property type="interactions" value="29"/>
</dbReference>
<dbReference type="DIP" id="DIP-4632N"/>
<dbReference type="FunCoup" id="O13577">
    <property type="interactions" value="83"/>
</dbReference>
<dbReference type="STRING" id="4932.YLR437C"/>
<dbReference type="iPTMnet" id="O13577"/>
<dbReference type="PaxDb" id="4932-YLR437C"/>
<dbReference type="PeptideAtlas" id="O13577"/>
<dbReference type="EnsemblFungi" id="YLR437C_mRNA">
    <property type="protein sequence ID" value="YLR437C"/>
    <property type="gene ID" value="YLR437C"/>
</dbReference>
<dbReference type="GeneID" id="851157"/>
<dbReference type="KEGG" id="sce:YLR437C"/>
<dbReference type="AGR" id="SGD:S000004429"/>
<dbReference type="SGD" id="S000004429">
    <property type="gene designation" value="DIF1"/>
</dbReference>
<dbReference type="VEuPathDB" id="FungiDB:YLR437C"/>
<dbReference type="eggNOG" id="ENOG502SGAU">
    <property type="taxonomic scope" value="Eukaryota"/>
</dbReference>
<dbReference type="HOGENOM" id="CLU_1887371_0_0_1"/>
<dbReference type="InParanoid" id="O13577"/>
<dbReference type="OMA" id="INQRTMS"/>
<dbReference type="OrthoDB" id="4053665at2759"/>
<dbReference type="BioCyc" id="YEAST:G3O-32494-MONOMER"/>
<dbReference type="PRO" id="PR:O13577"/>
<dbReference type="Proteomes" id="UP000002311">
    <property type="component" value="Chromosome XII"/>
</dbReference>
<dbReference type="RNAct" id="O13577">
    <property type="molecule type" value="protein"/>
</dbReference>
<dbReference type="GO" id="GO:0005737">
    <property type="term" value="C:cytoplasm"/>
    <property type="evidence" value="ECO:0000314"/>
    <property type="project" value="SGD"/>
</dbReference>
<dbReference type="GO" id="GO:0005634">
    <property type="term" value="C:nucleus"/>
    <property type="evidence" value="ECO:0000318"/>
    <property type="project" value="GO_Central"/>
</dbReference>
<dbReference type="GO" id="GO:1990846">
    <property type="term" value="F:ribonucleoside-diphosphate reductase inhibitor activity"/>
    <property type="evidence" value="ECO:0000318"/>
    <property type="project" value="GO_Central"/>
</dbReference>
<dbReference type="GO" id="GO:0006606">
    <property type="term" value="P:protein import into nucleus"/>
    <property type="evidence" value="ECO:0000315"/>
    <property type="project" value="SGD"/>
</dbReference>
<dbReference type="GO" id="GO:0008104">
    <property type="term" value="P:protein localization"/>
    <property type="evidence" value="ECO:0000318"/>
    <property type="project" value="GO_Central"/>
</dbReference>
<dbReference type="InterPro" id="IPR013900">
    <property type="entry name" value="RNR_inhibitor"/>
</dbReference>
<dbReference type="PANTHER" id="PTHR28081:SF1">
    <property type="entry name" value="DAMAGE-REGULATED IMPORT FACILITATOR 1"/>
    <property type="match status" value="1"/>
</dbReference>
<dbReference type="PANTHER" id="PTHR28081">
    <property type="entry name" value="DAMAGE-REGULATED IMPORT FACILITATOR 1-RELATED"/>
    <property type="match status" value="1"/>
</dbReference>
<evidence type="ECO:0000256" key="1">
    <source>
        <dbReference type="SAM" id="MobiDB-lite"/>
    </source>
</evidence>
<evidence type="ECO:0000269" key="2">
    <source>
    </source>
</evidence>
<evidence type="ECO:0000269" key="3">
    <source>
    </source>
</evidence>
<evidence type="ECO:0000269" key="4">
    <source>
    </source>
</evidence>
<evidence type="ECO:0000305" key="5"/>
<accession>O13577</accession>
<accession>D6VZ71</accession>
<sequence>MDAQLEWASSLVPKRQLQQQQQQQEQQQQQQQDFHKDQLMTVGMRIRQRVDQGYASRTPSTSDASLQPGVIRDYSSVIVPQFTRSPLPTANSLPPMLINQRTMSTEASSLEKWDVAEPAAEHETMVNGSKRRL</sequence>
<name>DIF1_YEAST</name>
<proteinExistence type="evidence at protein level"/>
<protein>
    <recommendedName>
        <fullName>Damage-regulated import facilitator 1</fullName>
    </recommendedName>
</protein>
<gene>
    <name type="primary">DIF1</name>
    <name type="ordered locus">YLR437C</name>
</gene>
<keyword id="KW-0963">Cytoplasm</keyword>
<keyword id="KW-0539">Nucleus</keyword>
<keyword id="KW-0597">Phosphoprotein</keyword>
<keyword id="KW-1185">Reference proteome</keyword>
<reference key="1">
    <citation type="journal article" date="1997" name="Nature">
        <title>The nucleotide sequence of Saccharomyces cerevisiae chromosome XII.</title>
        <authorList>
            <person name="Johnston M."/>
            <person name="Hillier L.W."/>
            <person name="Riles L."/>
            <person name="Albermann K."/>
            <person name="Andre B."/>
            <person name="Ansorge W."/>
            <person name="Benes V."/>
            <person name="Brueckner M."/>
            <person name="Delius H."/>
            <person name="Dubois E."/>
            <person name="Duesterhoeft A."/>
            <person name="Entian K.-D."/>
            <person name="Floeth M."/>
            <person name="Goffeau A."/>
            <person name="Hebling U."/>
            <person name="Heumann K."/>
            <person name="Heuss-Neitzel D."/>
            <person name="Hilbert H."/>
            <person name="Hilger F."/>
            <person name="Kleine K."/>
            <person name="Koetter P."/>
            <person name="Louis E.J."/>
            <person name="Messenguy F."/>
            <person name="Mewes H.-W."/>
            <person name="Miosga T."/>
            <person name="Moestl D."/>
            <person name="Mueller-Auer S."/>
            <person name="Nentwich U."/>
            <person name="Obermaier B."/>
            <person name="Piravandi E."/>
            <person name="Pohl T.M."/>
            <person name="Portetelle D."/>
            <person name="Purnelle B."/>
            <person name="Rechmann S."/>
            <person name="Rieger M."/>
            <person name="Rinke M."/>
            <person name="Rose M."/>
            <person name="Scharfe M."/>
            <person name="Scherens B."/>
            <person name="Scholler P."/>
            <person name="Schwager C."/>
            <person name="Schwarz S."/>
            <person name="Underwood A.P."/>
            <person name="Urrestarazu L.A."/>
            <person name="Vandenbol M."/>
            <person name="Verhasselt P."/>
            <person name="Vierendeels F."/>
            <person name="Voet M."/>
            <person name="Volckaert G."/>
            <person name="Voss H."/>
            <person name="Wambutt R."/>
            <person name="Wedler E."/>
            <person name="Wedler H."/>
            <person name="Zimmermann F.K."/>
            <person name="Zollner A."/>
            <person name="Hani J."/>
            <person name="Hoheisel J.D."/>
        </authorList>
    </citation>
    <scope>NUCLEOTIDE SEQUENCE [LARGE SCALE GENOMIC DNA]</scope>
    <source>
        <strain>ATCC 204508 / S288c</strain>
    </source>
</reference>
<reference key="2">
    <citation type="journal article" date="2014" name="G3 (Bethesda)">
        <title>The reference genome sequence of Saccharomyces cerevisiae: Then and now.</title>
        <authorList>
            <person name="Engel S.R."/>
            <person name="Dietrich F.S."/>
            <person name="Fisk D.G."/>
            <person name="Binkley G."/>
            <person name="Balakrishnan R."/>
            <person name="Costanzo M.C."/>
            <person name="Dwight S.S."/>
            <person name="Hitz B.C."/>
            <person name="Karra K."/>
            <person name="Nash R.S."/>
            <person name="Weng S."/>
            <person name="Wong E.D."/>
            <person name="Lloyd P."/>
            <person name="Skrzypek M.S."/>
            <person name="Miyasato S.R."/>
            <person name="Simison M."/>
            <person name="Cherry J.M."/>
        </authorList>
    </citation>
    <scope>GENOME REANNOTATION</scope>
    <source>
        <strain>ATCC 204508 / S288c</strain>
    </source>
</reference>
<reference key="3">
    <citation type="journal article" date="2005" name="Yeast">
        <title>New weakly expressed cell cycle-regulated genes in yeast.</title>
        <authorList>
            <person name="de Lichtenberg U."/>
            <person name="Wernersson R."/>
            <person name="Jensen T.S."/>
            <person name="Nielsen H.B."/>
            <person name="Fausboell A."/>
            <person name="Schmidt P."/>
            <person name="Hansen F.B."/>
            <person name="Knudsen S."/>
            <person name="Brunak S."/>
        </authorList>
    </citation>
    <scope>INDUCTION</scope>
</reference>
<reference key="4">
    <citation type="journal article" date="2008" name="Mol. Cell">
        <title>Dif1 is a DNA-damage-regulated facilitator of nuclear import for ribonucleotide reductase.</title>
        <authorList>
            <person name="Lee Y.D."/>
            <person name="Wang J."/>
            <person name="Stubbe J."/>
            <person name="Elledge S.J."/>
        </authorList>
    </citation>
    <scope>FUNCTION</scope>
    <scope>PHOSPHORYLATION BY DUN1</scope>
    <scope>INTERACTION WITH RNR2 AND RNR4</scope>
</reference>
<reference key="5">
    <citation type="journal article" date="2008" name="Mol. Cell. Biol.">
        <title>Dif1 controls subcellular localization of ribonucleotide reductase by mediating nuclear import of the R2 subunit.</title>
        <authorList>
            <person name="Wu X."/>
            <person name="Huang M."/>
        </authorList>
    </citation>
    <scope>FUNCTION</scope>
    <scope>SUBCELLULAR LOCATION</scope>
    <scope>PHOSPHORYLATION</scope>
</reference>